<sequence length="334" mass="37370">MKKNQFLKESDVTAESVFFMKRRQVLKALGISAAALSLPHAAHADLLSWFKGNDRPPAPAGKALEFSKPAAWQNNLPLTPADKVSGYNNFYEFGLDKADPAANAGSLKTDPWTLKISGEVAKPLTLDHDDLTRRFPLEERIYRMRCVEAWSMVVPWIGFPLHKLLALAEPTSNAKYVAFETIYAPEQMPGQQDRFIGGGLKYPYVEGLRLDEAMHPLTLMTVGVYGKALPPQNGAPVRLIVPWKYGFKGIKSIVSIKLTRERPPTTWNLAAPDEYGFYANVNPHVDHPRWSQATERFIGSGGILNVQRQPTLLFNGYAEQVASLYRGLDLRENF</sequence>
<evidence type="ECO:0000255" key="1">
    <source>
        <dbReference type="HAMAP-Rule" id="MF_01206"/>
    </source>
</evidence>
<name>MSRP_ECOUT</name>
<accession>Q1RAH1</accession>
<proteinExistence type="inferred from homology"/>
<comment type="function">
    <text evidence="1">Part of the MsrPQ system that repairs oxidized periplasmic proteins containing methionine sulfoxide residues (Met-O), using respiratory chain electrons. Thus protects these proteins from oxidative-stress damage caused by reactive species of oxygen and chlorine generated by the host defense mechanisms. MsrPQ is essential for the maintenance of envelope integrity under bleach stress, rescuing a wide series of structurally unrelated periplasmic proteins from methionine oxidation, including the primary periplasmic chaperone SurA and the lipoprotein Pal. The catalytic subunit MsrP is non-stereospecific, being able to reduce both (R-) and (S-) diastereoisomers of methionine sulfoxide.</text>
</comment>
<comment type="catalytic activity">
    <reaction evidence="1">
        <text>L-methionyl-[protein] + a quinone + H2O = L-methionyl-(S)-S-oxide-[protein] + a quinol</text>
        <dbReference type="Rhea" id="RHEA:51292"/>
        <dbReference type="Rhea" id="RHEA-COMP:12313"/>
        <dbReference type="Rhea" id="RHEA-COMP:12315"/>
        <dbReference type="ChEBI" id="CHEBI:15377"/>
        <dbReference type="ChEBI" id="CHEBI:16044"/>
        <dbReference type="ChEBI" id="CHEBI:24646"/>
        <dbReference type="ChEBI" id="CHEBI:44120"/>
        <dbReference type="ChEBI" id="CHEBI:132124"/>
    </reaction>
</comment>
<comment type="catalytic activity">
    <reaction evidence="1">
        <text>L-methionyl-[protein] + a quinone + H2O = L-methionyl-(R)-S-oxide-[protein] + a quinol</text>
        <dbReference type="Rhea" id="RHEA:51296"/>
        <dbReference type="Rhea" id="RHEA-COMP:12313"/>
        <dbReference type="Rhea" id="RHEA-COMP:12314"/>
        <dbReference type="ChEBI" id="CHEBI:15377"/>
        <dbReference type="ChEBI" id="CHEBI:16044"/>
        <dbReference type="ChEBI" id="CHEBI:24646"/>
        <dbReference type="ChEBI" id="CHEBI:45764"/>
        <dbReference type="ChEBI" id="CHEBI:132124"/>
    </reaction>
</comment>
<comment type="cofactor">
    <cofactor evidence="1">
        <name>Mo-molybdopterin</name>
        <dbReference type="ChEBI" id="CHEBI:71302"/>
    </cofactor>
    <text evidence="1">Binds 1 Mo-molybdopterin (Mo-MPT) cofactor per subunit.</text>
</comment>
<comment type="subunit">
    <text evidence="1">Heterodimer of a catalytic subunit (MsrP) and a heme-binding subunit (MsrQ).</text>
</comment>
<comment type="subcellular location">
    <subcellularLocation>
        <location evidence="1">Periplasm</location>
    </subcellularLocation>
    <text evidence="1">Is attached to the inner membrane when interacting with the MsrQ subunit.</text>
</comment>
<comment type="PTM">
    <text evidence="1">Predicted to be exported by the Tat system. The position of the signal peptide cleavage has not been experimentally proven.</text>
</comment>
<comment type="similarity">
    <text evidence="1">Belongs to the MsrP family.</text>
</comment>
<protein>
    <recommendedName>
        <fullName evidence="1">Protein-methionine-sulfoxide reductase catalytic subunit MsrP</fullName>
        <ecNumber evidence="1">1.8.5.-</ecNumber>
    </recommendedName>
</protein>
<feature type="signal peptide" description="Tat-type signal" evidence="1">
    <location>
        <begin position="1"/>
        <end position="44"/>
    </location>
</feature>
<feature type="chain" id="PRO_1000066158" description="Protein-methionine-sulfoxide reductase catalytic subunit MsrP" evidence="1">
    <location>
        <begin position="45"/>
        <end position="334"/>
    </location>
</feature>
<feature type="binding site" evidence="1">
    <location>
        <position position="88"/>
    </location>
    <ligand>
        <name>Mo-molybdopterin</name>
        <dbReference type="ChEBI" id="CHEBI:71302"/>
    </ligand>
</feature>
<feature type="binding site" evidence="1">
    <location>
        <begin position="91"/>
        <end position="92"/>
    </location>
    <ligand>
        <name>Mo-molybdopterin</name>
        <dbReference type="ChEBI" id="CHEBI:71302"/>
    </ligand>
</feature>
<feature type="binding site" evidence="1">
    <location>
        <position position="146"/>
    </location>
    <ligand>
        <name>Mo-molybdopterin</name>
        <dbReference type="ChEBI" id="CHEBI:71302"/>
    </ligand>
    <ligandPart>
        <name>Mo</name>
        <dbReference type="ChEBI" id="CHEBI:28685"/>
    </ligandPart>
</feature>
<feature type="binding site" evidence="1">
    <location>
        <position position="181"/>
    </location>
    <ligand>
        <name>Mo-molybdopterin</name>
        <dbReference type="ChEBI" id="CHEBI:71302"/>
    </ligand>
</feature>
<feature type="binding site" evidence="1">
    <location>
        <position position="233"/>
    </location>
    <ligand>
        <name>Mo-molybdopterin</name>
        <dbReference type="ChEBI" id="CHEBI:71302"/>
    </ligand>
</feature>
<feature type="binding site" evidence="1">
    <location>
        <position position="238"/>
    </location>
    <ligand>
        <name>Mo-molybdopterin</name>
        <dbReference type="ChEBI" id="CHEBI:71302"/>
    </ligand>
</feature>
<feature type="binding site" evidence="1">
    <location>
        <begin position="249"/>
        <end position="251"/>
    </location>
    <ligand>
        <name>Mo-molybdopterin</name>
        <dbReference type="ChEBI" id="CHEBI:71302"/>
    </ligand>
</feature>
<gene>
    <name evidence="1" type="primary">msrP</name>
    <name type="ordered locus">UTI89_C2170</name>
</gene>
<reference key="1">
    <citation type="journal article" date="2006" name="Proc. Natl. Acad. Sci. U.S.A.">
        <title>Identification of genes subject to positive selection in uropathogenic strains of Escherichia coli: a comparative genomics approach.</title>
        <authorList>
            <person name="Chen S.L."/>
            <person name="Hung C.-S."/>
            <person name="Xu J."/>
            <person name="Reigstad C.S."/>
            <person name="Magrini V."/>
            <person name="Sabo A."/>
            <person name="Blasiar D."/>
            <person name="Bieri T."/>
            <person name="Meyer R.R."/>
            <person name="Ozersky P."/>
            <person name="Armstrong J.R."/>
            <person name="Fulton R.S."/>
            <person name="Latreille J.P."/>
            <person name="Spieth J."/>
            <person name="Hooton T.M."/>
            <person name="Mardis E.R."/>
            <person name="Hultgren S.J."/>
            <person name="Gordon J.I."/>
        </authorList>
    </citation>
    <scope>NUCLEOTIDE SEQUENCE [LARGE SCALE GENOMIC DNA]</scope>
    <source>
        <strain>UTI89 / UPEC</strain>
    </source>
</reference>
<dbReference type="EC" id="1.8.5.-" evidence="1"/>
<dbReference type="EMBL" id="CP000243">
    <property type="protein sequence ID" value="ABE07643.1"/>
    <property type="molecule type" value="Genomic_DNA"/>
</dbReference>
<dbReference type="RefSeq" id="WP_000740082.1">
    <property type="nucleotide sequence ID" value="NZ_CP064825.1"/>
</dbReference>
<dbReference type="SMR" id="Q1RAH1"/>
<dbReference type="KEGG" id="eci:UTI89_C2170"/>
<dbReference type="HOGENOM" id="CLU_045520_0_0_6"/>
<dbReference type="Proteomes" id="UP000001952">
    <property type="component" value="Chromosome"/>
</dbReference>
<dbReference type="GO" id="GO:0042597">
    <property type="term" value="C:periplasmic space"/>
    <property type="evidence" value="ECO:0007669"/>
    <property type="project" value="UniProtKB-SubCell"/>
</dbReference>
<dbReference type="GO" id="GO:0046872">
    <property type="term" value="F:metal ion binding"/>
    <property type="evidence" value="ECO:0007669"/>
    <property type="project" value="UniProtKB-KW"/>
</dbReference>
<dbReference type="GO" id="GO:0043546">
    <property type="term" value="F:molybdopterin cofactor binding"/>
    <property type="evidence" value="ECO:0007669"/>
    <property type="project" value="UniProtKB-UniRule"/>
</dbReference>
<dbReference type="GO" id="GO:0016672">
    <property type="term" value="F:oxidoreductase activity, acting on a sulfur group of donors, quinone or similar compound as acceptor"/>
    <property type="evidence" value="ECO:0007669"/>
    <property type="project" value="UniProtKB-UniRule"/>
</dbReference>
<dbReference type="GO" id="GO:0030091">
    <property type="term" value="P:protein repair"/>
    <property type="evidence" value="ECO:0007669"/>
    <property type="project" value="UniProtKB-UniRule"/>
</dbReference>
<dbReference type="CDD" id="cd02107">
    <property type="entry name" value="YedY_like_Moco"/>
    <property type="match status" value="1"/>
</dbReference>
<dbReference type="FunFam" id="3.90.420.10:FF:000001">
    <property type="entry name" value="Protein-methionine-sulfoxide reductase catalytic subunit MsrP"/>
    <property type="match status" value="1"/>
</dbReference>
<dbReference type="Gene3D" id="3.90.420.10">
    <property type="entry name" value="Oxidoreductase, molybdopterin-binding domain"/>
    <property type="match status" value="1"/>
</dbReference>
<dbReference type="HAMAP" id="MF_01206">
    <property type="entry name" value="MsrP"/>
    <property type="match status" value="1"/>
</dbReference>
<dbReference type="InterPro" id="IPR022867">
    <property type="entry name" value="MsrP"/>
</dbReference>
<dbReference type="InterPro" id="IPR000572">
    <property type="entry name" value="OxRdtase_Mopterin-bd_dom"/>
</dbReference>
<dbReference type="InterPro" id="IPR036374">
    <property type="entry name" value="OxRdtase_Mopterin-bd_sf"/>
</dbReference>
<dbReference type="InterPro" id="IPR006311">
    <property type="entry name" value="TAT_signal"/>
</dbReference>
<dbReference type="NCBIfam" id="NF003767">
    <property type="entry name" value="PRK05363.1"/>
    <property type="match status" value="1"/>
</dbReference>
<dbReference type="PANTHER" id="PTHR43032">
    <property type="entry name" value="PROTEIN-METHIONINE-SULFOXIDE REDUCTASE"/>
    <property type="match status" value="1"/>
</dbReference>
<dbReference type="PANTHER" id="PTHR43032:SF3">
    <property type="entry name" value="PROTEIN-METHIONINE-SULFOXIDE REDUCTASE CATALYTIC SUBUNIT MSRP"/>
    <property type="match status" value="1"/>
</dbReference>
<dbReference type="Pfam" id="PF00174">
    <property type="entry name" value="Oxidored_molyb"/>
    <property type="match status" value="1"/>
</dbReference>
<dbReference type="SUPFAM" id="SSF56524">
    <property type="entry name" value="Oxidoreductase molybdopterin-binding domain"/>
    <property type="match status" value="1"/>
</dbReference>
<dbReference type="PROSITE" id="PS51318">
    <property type="entry name" value="TAT"/>
    <property type="match status" value="1"/>
</dbReference>
<keyword id="KW-0479">Metal-binding</keyword>
<keyword id="KW-0500">Molybdenum</keyword>
<keyword id="KW-0560">Oxidoreductase</keyword>
<keyword id="KW-0574">Periplasm</keyword>
<keyword id="KW-0732">Signal</keyword>
<organism>
    <name type="scientific">Escherichia coli (strain UTI89 / UPEC)</name>
    <dbReference type="NCBI Taxonomy" id="364106"/>
    <lineage>
        <taxon>Bacteria</taxon>
        <taxon>Pseudomonadati</taxon>
        <taxon>Pseudomonadota</taxon>
        <taxon>Gammaproteobacteria</taxon>
        <taxon>Enterobacterales</taxon>
        <taxon>Enterobacteriaceae</taxon>
        <taxon>Escherichia</taxon>
    </lineage>
</organism>